<feature type="chain" id="PRO_0000241948" description="Malate dehydrogenase">
    <location>
        <begin position="1"/>
        <end position="313"/>
    </location>
</feature>
<feature type="active site" description="Proton acceptor" evidence="1">
    <location>
        <position position="177"/>
    </location>
</feature>
<feature type="binding site" evidence="1">
    <location>
        <begin position="11"/>
        <end position="16"/>
    </location>
    <ligand>
        <name>NAD(+)</name>
        <dbReference type="ChEBI" id="CHEBI:57540"/>
    </ligand>
</feature>
<feature type="binding site" evidence="1">
    <location>
        <position position="35"/>
    </location>
    <ligand>
        <name>NAD(+)</name>
        <dbReference type="ChEBI" id="CHEBI:57540"/>
    </ligand>
</feature>
<feature type="binding site" evidence="1">
    <location>
        <position position="84"/>
    </location>
    <ligand>
        <name>substrate</name>
    </ligand>
</feature>
<feature type="binding site" evidence="1">
    <location>
        <position position="90"/>
    </location>
    <ligand>
        <name>substrate</name>
    </ligand>
</feature>
<feature type="binding site" evidence="1">
    <location>
        <position position="97"/>
    </location>
    <ligand>
        <name>NAD(+)</name>
        <dbReference type="ChEBI" id="CHEBI:57540"/>
    </ligand>
</feature>
<feature type="binding site" evidence="1">
    <location>
        <begin position="120"/>
        <end position="122"/>
    </location>
    <ligand>
        <name>NAD(+)</name>
        <dbReference type="ChEBI" id="CHEBI:57540"/>
    </ligand>
</feature>
<feature type="binding site" evidence="1">
    <location>
        <position position="122"/>
    </location>
    <ligand>
        <name>substrate</name>
    </ligand>
</feature>
<feature type="binding site" evidence="1">
    <location>
        <position position="153"/>
    </location>
    <ligand>
        <name>substrate</name>
    </ligand>
</feature>
<proteinExistence type="inferred from homology"/>
<comment type="function">
    <text evidence="1">Catalyzes the reversible oxidation of malate to oxaloacetate.</text>
</comment>
<comment type="catalytic activity">
    <reaction evidence="1">
        <text>(S)-malate + NAD(+) = oxaloacetate + NADH + H(+)</text>
        <dbReference type="Rhea" id="RHEA:21432"/>
        <dbReference type="ChEBI" id="CHEBI:15378"/>
        <dbReference type="ChEBI" id="CHEBI:15589"/>
        <dbReference type="ChEBI" id="CHEBI:16452"/>
        <dbReference type="ChEBI" id="CHEBI:57540"/>
        <dbReference type="ChEBI" id="CHEBI:57945"/>
        <dbReference type="EC" id="1.1.1.37"/>
    </reaction>
</comment>
<comment type="similarity">
    <text evidence="1">Belongs to the LDH/MDH superfamily. MDH type 3 family.</text>
</comment>
<evidence type="ECO:0000255" key="1">
    <source>
        <dbReference type="HAMAP-Rule" id="MF_00487"/>
    </source>
</evidence>
<gene>
    <name evidence="1" type="primary">mdh</name>
    <name type="ordered locus">ECH_0641</name>
</gene>
<name>MDH_EHRCR</name>
<reference key="1">
    <citation type="journal article" date="2006" name="PLoS Genet.">
        <title>Comparative genomics of emerging human ehrlichiosis agents.</title>
        <authorList>
            <person name="Dunning Hotopp J.C."/>
            <person name="Lin M."/>
            <person name="Madupu R."/>
            <person name="Crabtree J."/>
            <person name="Angiuoli S.V."/>
            <person name="Eisen J.A."/>
            <person name="Seshadri R."/>
            <person name="Ren Q."/>
            <person name="Wu M."/>
            <person name="Utterback T.R."/>
            <person name="Smith S."/>
            <person name="Lewis M."/>
            <person name="Khouri H."/>
            <person name="Zhang C."/>
            <person name="Niu H."/>
            <person name="Lin Q."/>
            <person name="Ohashi N."/>
            <person name="Zhi N."/>
            <person name="Nelson W.C."/>
            <person name="Brinkac L.M."/>
            <person name="Dodson R.J."/>
            <person name="Rosovitz M.J."/>
            <person name="Sundaram J.P."/>
            <person name="Daugherty S.C."/>
            <person name="Davidsen T."/>
            <person name="Durkin A.S."/>
            <person name="Gwinn M.L."/>
            <person name="Haft D.H."/>
            <person name="Selengut J.D."/>
            <person name="Sullivan S.A."/>
            <person name="Zafar N."/>
            <person name="Zhou L."/>
            <person name="Benahmed F."/>
            <person name="Forberger H."/>
            <person name="Halpin R."/>
            <person name="Mulligan S."/>
            <person name="Robinson J."/>
            <person name="White O."/>
            <person name="Rikihisa Y."/>
            <person name="Tettelin H."/>
        </authorList>
    </citation>
    <scope>NUCLEOTIDE SEQUENCE [LARGE SCALE GENOMIC DNA]</scope>
    <source>
        <strain>ATCC CRL-10679 / Arkansas</strain>
    </source>
</reference>
<accession>Q2GGI2</accession>
<protein>
    <recommendedName>
        <fullName evidence="1">Malate dehydrogenase</fullName>
        <ecNumber evidence="1">1.1.1.37</ecNumber>
    </recommendedName>
</protein>
<sequence length="313" mass="33688">MIKRKKIALIGAGSIGGMIAYLVRSRNLGDVVLLDVNGGIAKGKALDIAESSPVAKHNGEILGTNNYADIEGADAIIVTAGISRKPGMSRDDLINTNVHVIKEVAENIAKYAPNAFVVVVTNPLDIMVLAMHKYSHLPSNMVVGMAGVLDAARFSYFIAKELNVSVDSVSSIVLGGHGDFMLPLVKYSSVGGISIADLVKMNLITQDRVNEIIEKTRKGGEEIVNLLKVGSAYYAPAESALLMVDSYLNDRRLMLSCSVYLKGEYGVHDLFVGVPVIIGKNGVEKVIELQLTEEEKNVFNDSVMSIRKLVSNI</sequence>
<organism>
    <name type="scientific">Ehrlichia chaffeensis (strain ATCC CRL-10679 / Arkansas)</name>
    <dbReference type="NCBI Taxonomy" id="205920"/>
    <lineage>
        <taxon>Bacteria</taxon>
        <taxon>Pseudomonadati</taxon>
        <taxon>Pseudomonadota</taxon>
        <taxon>Alphaproteobacteria</taxon>
        <taxon>Rickettsiales</taxon>
        <taxon>Anaplasmataceae</taxon>
        <taxon>Ehrlichia</taxon>
    </lineage>
</organism>
<keyword id="KW-0520">NAD</keyword>
<keyword id="KW-0560">Oxidoreductase</keyword>
<keyword id="KW-1185">Reference proteome</keyword>
<keyword id="KW-0816">Tricarboxylic acid cycle</keyword>
<dbReference type="EC" id="1.1.1.37" evidence="1"/>
<dbReference type="EMBL" id="CP000236">
    <property type="protein sequence ID" value="ABD44535.1"/>
    <property type="molecule type" value="Genomic_DNA"/>
</dbReference>
<dbReference type="RefSeq" id="WP_011452731.1">
    <property type="nucleotide sequence ID" value="NC_007799.1"/>
</dbReference>
<dbReference type="SMR" id="Q2GGI2"/>
<dbReference type="STRING" id="205920.ECH_0641"/>
<dbReference type="KEGG" id="ech:ECH_0641"/>
<dbReference type="eggNOG" id="COG0039">
    <property type="taxonomic scope" value="Bacteria"/>
</dbReference>
<dbReference type="HOGENOM" id="CLU_045401_2_1_5"/>
<dbReference type="OrthoDB" id="9802969at2"/>
<dbReference type="Proteomes" id="UP000008320">
    <property type="component" value="Chromosome"/>
</dbReference>
<dbReference type="GO" id="GO:0004459">
    <property type="term" value="F:L-lactate dehydrogenase activity"/>
    <property type="evidence" value="ECO:0007669"/>
    <property type="project" value="TreeGrafter"/>
</dbReference>
<dbReference type="GO" id="GO:0030060">
    <property type="term" value="F:L-malate dehydrogenase (NAD+) activity"/>
    <property type="evidence" value="ECO:0007669"/>
    <property type="project" value="UniProtKB-UniRule"/>
</dbReference>
<dbReference type="GO" id="GO:0006089">
    <property type="term" value="P:lactate metabolic process"/>
    <property type="evidence" value="ECO:0007669"/>
    <property type="project" value="TreeGrafter"/>
</dbReference>
<dbReference type="GO" id="GO:0006099">
    <property type="term" value="P:tricarboxylic acid cycle"/>
    <property type="evidence" value="ECO:0007669"/>
    <property type="project" value="UniProtKB-UniRule"/>
</dbReference>
<dbReference type="CDD" id="cd01339">
    <property type="entry name" value="LDH-like_MDH"/>
    <property type="match status" value="1"/>
</dbReference>
<dbReference type="FunFam" id="3.40.50.720:FF:000018">
    <property type="entry name" value="Malate dehydrogenase"/>
    <property type="match status" value="1"/>
</dbReference>
<dbReference type="FunFam" id="3.90.110.10:FF:000004">
    <property type="entry name" value="Malate dehydrogenase"/>
    <property type="match status" value="1"/>
</dbReference>
<dbReference type="Gene3D" id="3.90.110.10">
    <property type="entry name" value="Lactate dehydrogenase/glycoside hydrolase, family 4, C-terminal"/>
    <property type="match status" value="1"/>
</dbReference>
<dbReference type="Gene3D" id="3.40.50.720">
    <property type="entry name" value="NAD(P)-binding Rossmann-like Domain"/>
    <property type="match status" value="1"/>
</dbReference>
<dbReference type="HAMAP" id="MF_00487">
    <property type="entry name" value="Malate_dehydrog_3"/>
    <property type="match status" value="1"/>
</dbReference>
<dbReference type="InterPro" id="IPR001557">
    <property type="entry name" value="L-lactate/malate_DH"/>
</dbReference>
<dbReference type="InterPro" id="IPR022383">
    <property type="entry name" value="Lactate/malate_DH_C"/>
</dbReference>
<dbReference type="InterPro" id="IPR001236">
    <property type="entry name" value="Lactate/malate_DH_N"/>
</dbReference>
<dbReference type="InterPro" id="IPR015955">
    <property type="entry name" value="Lactate_DH/Glyco_Ohase_4_C"/>
</dbReference>
<dbReference type="InterPro" id="IPR011275">
    <property type="entry name" value="Malate_DH_type3"/>
</dbReference>
<dbReference type="InterPro" id="IPR036291">
    <property type="entry name" value="NAD(P)-bd_dom_sf"/>
</dbReference>
<dbReference type="NCBIfam" id="TIGR01763">
    <property type="entry name" value="MalateDH_bact"/>
    <property type="match status" value="1"/>
</dbReference>
<dbReference type="NCBIfam" id="NF004863">
    <property type="entry name" value="PRK06223.1"/>
    <property type="match status" value="1"/>
</dbReference>
<dbReference type="PANTHER" id="PTHR43128">
    <property type="entry name" value="L-2-HYDROXYCARBOXYLATE DEHYDROGENASE (NAD(P)(+))"/>
    <property type="match status" value="1"/>
</dbReference>
<dbReference type="PANTHER" id="PTHR43128:SF16">
    <property type="entry name" value="L-LACTATE DEHYDROGENASE"/>
    <property type="match status" value="1"/>
</dbReference>
<dbReference type="Pfam" id="PF02866">
    <property type="entry name" value="Ldh_1_C"/>
    <property type="match status" value="1"/>
</dbReference>
<dbReference type="Pfam" id="PF00056">
    <property type="entry name" value="Ldh_1_N"/>
    <property type="match status" value="1"/>
</dbReference>
<dbReference type="PIRSF" id="PIRSF000102">
    <property type="entry name" value="Lac_mal_DH"/>
    <property type="match status" value="1"/>
</dbReference>
<dbReference type="PRINTS" id="PR00086">
    <property type="entry name" value="LLDHDRGNASE"/>
</dbReference>
<dbReference type="SUPFAM" id="SSF56327">
    <property type="entry name" value="LDH C-terminal domain-like"/>
    <property type="match status" value="1"/>
</dbReference>
<dbReference type="SUPFAM" id="SSF51735">
    <property type="entry name" value="NAD(P)-binding Rossmann-fold domains"/>
    <property type="match status" value="1"/>
</dbReference>